<gene>
    <name evidence="1" type="primary">sfsA</name>
    <name type="ordered locus">SSON_0158</name>
</gene>
<feature type="chain" id="PRO_1000008035" description="Sugar fermentation stimulation protein A">
    <location>
        <begin position="1"/>
        <end position="234"/>
    </location>
</feature>
<feature type="DNA-binding region" description="H-T-H motif" evidence="1">
    <location>
        <begin position="201"/>
        <end position="220"/>
    </location>
</feature>
<organism>
    <name type="scientific">Shigella sonnei (strain Ss046)</name>
    <dbReference type="NCBI Taxonomy" id="300269"/>
    <lineage>
        <taxon>Bacteria</taxon>
        <taxon>Pseudomonadati</taxon>
        <taxon>Pseudomonadota</taxon>
        <taxon>Gammaproteobacteria</taxon>
        <taxon>Enterobacterales</taxon>
        <taxon>Enterobacteriaceae</taxon>
        <taxon>Shigella</taxon>
    </lineage>
</organism>
<comment type="function">
    <text evidence="1">Binds to DNA non-specifically. Could be a regulatory factor involved in maltose metabolism.</text>
</comment>
<comment type="similarity">
    <text evidence="1">Belongs to the SfsA family.</text>
</comment>
<proteinExistence type="inferred from homology"/>
<dbReference type="EMBL" id="CP000038">
    <property type="protein sequence ID" value="AAZ86951.1"/>
    <property type="molecule type" value="Genomic_DNA"/>
</dbReference>
<dbReference type="RefSeq" id="WP_000396055.1">
    <property type="nucleotide sequence ID" value="NC_007384.1"/>
</dbReference>
<dbReference type="SMR" id="Q3Z5L1"/>
<dbReference type="GeneID" id="93777281"/>
<dbReference type="KEGG" id="ssn:SSON_0158"/>
<dbReference type="HOGENOM" id="CLU_052299_2_0_6"/>
<dbReference type="Proteomes" id="UP000002529">
    <property type="component" value="Chromosome"/>
</dbReference>
<dbReference type="GO" id="GO:0003677">
    <property type="term" value="F:DNA binding"/>
    <property type="evidence" value="ECO:0007669"/>
    <property type="project" value="UniProtKB-KW"/>
</dbReference>
<dbReference type="CDD" id="cd22359">
    <property type="entry name" value="SfsA-like_bacterial"/>
    <property type="match status" value="1"/>
</dbReference>
<dbReference type="FunFam" id="2.40.50.580:FF:000001">
    <property type="entry name" value="Sugar fermentation stimulation protein A"/>
    <property type="match status" value="1"/>
</dbReference>
<dbReference type="FunFam" id="3.40.1350.60:FF:000001">
    <property type="entry name" value="Sugar fermentation stimulation protein A"/>
    <property type="match status" value="1"/>
</dbReference>
<dbReference type="Gene3D" id="2.40.50.580">
    <property type="match status" value="1"/>
</dbReference>
<dbReference type="Gene3D" id="3.40.1350.60">
    <property type="match status" value="1"/>
</dbReference>
<dbReference type="HAMAP" id="MF_00095">
    <property type="entry name" value="SfsA"/>
    <property type="match status" value="1"/>
</dbReference>
<dbReference type="InterPro" id="IPR005224">
    <property type="entry name" value="SfsA"/>
</dbReference>
<dbReference type="InterPro" id="IPR040452">
    <property type="entry name" value="SfsA_C"/>
</dbReference>
<dbReference type="InterPro" id="IPR041465">
    <property type="entry name" value="SfsA_N"/>
</dbReference>
<dbReference type="NCBIfam" id="TIGR00230">
    <property type="entry name" value="sfsA"/>
    <property type="match status" value="1"/>
</dbReference>
<dbReference type="PANTHER" id="PTHR30545">
    <property type="entry name" value="SUGAR FERMENTATION STIMULATION PROTEIN A"/>
    <property type="match status" value="1"/>
</dbReference>
<dbReference type="PANTHER" id="PTHR30545:SF2">
    <property type="entry name" value="SUGAR FERMENTATION STIMULATION PROTEIN A"/>
    <property type="match status" value="1"/>
</dbReference>
<dbReference type="Pfam" id="PF03749">
    <property type="entry name" value="SfsA"/>
    <property type="match status" value="1"/>
</dbReference>
<dbReference type="Pfam" id="PF17746">
    <property type="entry name" value="SfsA_N"/>
    <property type="match status" value="1"/>
</dbReference>
<sequence length="234" mass="26305">MEFSPPLQRATLIQRYKRFLADVITPDGRELTLHCPNTGAMTGCATRGDTVWYSTSDNTKRKYPHTWELTQSQSGAFICVNTLWANRLTKEAILNESISELSGYSSLKSEVKYGAERSRIDFMLQADSRPDCYIEVKSVTLAENEQGYFPDAVTERGQKHLRELMNVAAEGQRAVIFFAVLHSAITRFSPARHIDEKYAQLLSEAQQRGVEILAYKAEISAEGMALKKSLSVTL</sequence>
<protein>
    <recommendedName>
        <fullName evidence="1">Sugar fermentation stimulation protein A</fullName>
    </recommendedName>
</protein>
<accession>Q3Z5L1</accession>
<name>SFSA_SHISS</name>
<evidence type="ECO:0000255" key="1">
    <source>
        <dbReference type="HAMAP-Rule" id="MF_00095"/>
    </source>
</evidence>
<keyword id="KW-0238">DNA-binding</keyword>
<keyword id="KW-1185">Reference proteome</keyword>
<reference key="1">
    <citation type="journal article" date="2005" name="Nucleic Acids Res.">
        <title>Genome dynamics and diversity of Shigella species, the etiologic agents of bacillary dysentery.</title>
        <authorList>
            <person name="Yang F."/>
            <person name="Yang J."/>
            <person name="Zhang X."/>
            <person name="Chen L."/>
            <person name="Jiang Y."/>
            <person name="Yan Y."/>
            <person name="Tang X."/>
            <person name="Wang J."/>
            <person name="Xiong Z."/>
            <person name="Dong J."/>
            <person name="Xue Y."/>
            <person name="Zhu Y."/>
            <person name="Xu X."/>
            <person name="Sun L."/>
            <person name="Chen S."/>
            <person name="Nie H."/>
            <person name="Peng J."/>
            <person name="Xu J."/>
            <person name="Wang Y."/>
            <person name="Yuan Z."/>
            <person name="Wen Y."/>
            <person name="Yao Z."/>
            <person name="Shen Y."/>
            <person name="Qiang B."/>
            <person name="Hou Y."/>
            <person name="Yu J."/>
            <person name="Jin Q."/>
        </authorList>
    </citation>
    <scope>NUCLEOTIDE SEQUENCE [LARGE SCALE GENOMIC DNA]</scope>
    <source>
        <strain>Ss046</strain>
    </source>
</reference>